<proteinExistence type="inferred from homology"/>
<protein>
    <recommendedName>
        <fullName evidence="1">ATP synthase subunit alpha</fullName>
        <ecNumber evidence="1">7.1.2.2</ecNumber>
    </recommendedName>
    <alternativeName>
        <fullName evidence="1">ATP synthase F1 sector subunit alpha</fullName>
    </alternativeName>
    <alternativeName>
        <fullName evidence="1">F-ATPase subunit alpha</fullName>
    </alternativeName>
</protein>
<reference key="1">
    <citation type="journal article" date="2005" name="Jpn. Agric. Res. Q.">
        <title>Genome sequence of Xanthomonas oryzae pv. oryzae suggests contribution of large numbers of effector genes and insertion sequences to its race diversity.</title>
        <authorList>
            <person name="Ochiai H."/>
            <person name="Inoue Y."/>
            <person name="Takeya M."/>
            <person name="Sasaki A."/>
            <person name="Kaku H."/>
        </authorList>
    </citation>
    <scope>NUCLEOTIDE SEQUENCE [LARGE SCALE GENOMIC DNA]</scope>
    <source>
        <strain>MAFF 311018</strain>
    </source>
</reference>
<dbReference type="EC" id="7.1.2.2" evidence="1"/>
<dbReference type="EMBL" id="AP008229">
    <property type="protein sequence ID" value="BAE67421.1"/>
    <property type="molecule type" value="Genomic_DNA"/>
</dbReference>
<dbReference type="RefSeq" id="WP_011257623.1">
    <property type="nucleotide sequence ID" value="NC_007705.1"/>
</dbReference>
<dbReference type="SMR" id="Q2P7Q6"/>
<dbReference type="KEGG" id="xom:XOO0666"/>
<dbReference type="HOGENOM" id="CLU_010091_2_1_6"/>
<dbReference type="GO" id="GO:0005886">
    <property type="term" value="C:plasma membrane"/>
    <property type="evidence" value="ECO:0007669"/>
    <property type="project" value="UniProtKB-SubCell"/>
</dbReference>
<dbReference type="GO" id="GO:0045259">
    <property type="term" value="C:proton-transporting ATP synthase complex"/>
    <property type="evidence" value="ECO:0007669"/>
    <property type="project" value="UniProtKB-KW"/>
</dbReference>
<dbReference type="GO" id="GO:0043531">
    <property type="term" value="F:ADP binding"/>
    <property type="evidence" value="ECO:0007669"/>
    <property type="project" value="TreeGrafter"/>
</dbReference>
<dbReference type="GO" id="GO:0005524">
    <property type="term" value="F:ATP binding"/>
    <property type="evidence" value="ECO:0007669"/>
    <property type="project" value="UniProtKB-UniRule"/>
</dbReference>
<dbReference type="GO" id="GO:0046933">
    <property type="term" value="F:proton-transporting ATP synthase activity, rotational mechanism"/>
    <property type="evidence" value="ECO:0007669"/>
    <property type="project" value="UniProtKB-UniRule"/>
</dbReference>
<dbReference type="CDD" id="cd18113">
    <property type="entry name" value="ATP-synt_F1_alpha_C"/>
    <property type="match status" value="1"/>
</dbReference>
<dbReference type="CDD" id="cd18116">
    <property type="entry name" value="ATP-synt_F1_alpha_N"/>
    <property type="match status" value="1"/>
</dbReference>
<dbReference type="CDD" id="cd01132">
    <property type="entry name" value="F1-ATPase_alpha_CD"/>
    <property type="match status" value="1"/>
</dbReference>
<dbReference type="FunFam" id="1.20.150.20:FF:000001">
    <property type="entry name" value="ATP synthase subunit alpha"/>
    <property type="match status" value="1"/>
</dbReference>
<dbReference type="FunFam" id="2.40.30.20:FF:000001">
    <property type="entry name" value="ATP synthase subunit alpha"/>
    <property type="match status" value="1"/>
</dbReference>
<dbReference type="FunFam" id="3.40.50.300:FF:000002">
    <property type="entry name" value="ATP synthase subunit alpha"/>
    <property type="match status" value="1"/>
</dbReference>
<dbReference type="Gene3D" id="2.40.30.20">
    <property type="match status" value="1"/>
</dbReference>
<dbReference type="Gene3D" id="1.20.150.20">
    <property type="entry name" value="ATP synthase alpha/beta chain, C-terminal domain"/>
    <property type="match status" value="1"/>
</dbReference>
<dbReference type="Gene3D" id="3.40.50.300">
    <property type="entry name" value="P-loop containing nucleotide triphosphate hydrolases"/>
    <property type="match status" value="1"/>
</dbReference>
<dbReference type="HAMAP" id="MF_01346">
    <property type="entry name" value="ATP_synth_alpha_bact"/>
    <property type="match status" value="1"/>
</dbReference>
<dbReference type="InterPro" id="IPR023366">
    <property type="entry name" value="ATP_synth_asu-like_sf"/>
</dbReference>
<dbReference type="InterPro" id="IPR000793">
    <property type="entry name" value="ATP_synth_asu_C"/>
</dbReference>
<dbReference type="InterPro" id="IPR038376">
    <property type="entry name" value="ATP_synth_asu_C_sf"/>
</dbReference>
<dbReference type="InterPro" id="IPR033732">
    <property type="entry name" value="ATP_synth_F1_a_nt-bd_dom"/>
</dbReference>
<dbReference type="InterPro" id="IPR005294">
    <property type="entry name" value="ATP_synth_F1_asu"/>
</dbReference>
<dbReference type="InterPro" id="IPR020003">
    <property type="entry name" value="ATPase_a/bsu_AS"/>
</dbReference>
<dbReference type="InterPro" id="IPR004100">
    <property type="entry name" value="ATPase_F1/V1/A1_a/bsu_N"/>
</dbReference>
<dbReference type="InterPro" id="IPR036121">
    <property type="entry name" value="ATPase_F1/V1/A1_a/bsu_N_sf"/>
</dbReference>
<dbReference type="InterPro" id="IPR000194">
    <property type="entry name" value="ATPase_F1/V1/A1_a/bsu_nucl-bd"/>
</dbReference>
<dbReference type="InterPro" id="IPR027417">
    <property type="entry name" value="P-loop_NTPase"/>
</dbReference>
<dbReference type="NCBIfam" id="TIGR00962">
    <property type="entry name" value="atpA"/>
    <property type="match status" value="1"/>
</dbReference>
<dbReference type="NCBIfam" id="NF009884">
    <property type="entry name" value="PRK13343.1"/>
    <property type="match status" value="1"/>
</dbReference>
<dbReference type="PANTHER" id="PTHR48082">
    <property type="entry name" value="ATP SYNTHASE SUBUNIT ALPHA, MITOCHONDRIAL"/>
    <property type="match status" value="1"/>
</dbReference>
<dbReference type="PANTHER" id="PTHR48082:SF2">
    <property type="entry name" value="ATP SYNTHASE SUBUNIT ALPHA, MITOCHONDRIAL"/>
    <property type="match status" value="1"/>
</dbReference>
<dbReference type="Pfam" id="PF00006">
    <property type="entry name" value="ATP-synt_ab"/>
    <property type="match status" value="1"/>
</dbReference>
<dbReference type="Pfam" id="PF00306">
    <property type="entry name" value="ATP-synt_ab_C"/>
    <property type="match status" value="1"/>
</dbReference>
<dbReference type="Pfam" id="PF02874">
    <property type="entry name" value="ATP-synt_ab_N"/>
    <property type="match status" value="1"/>
</dbReference>
<dbReference type="SUPFAM" id="SSF47917">
    <property type="entry name" value="C-terminal domain of alpha and beta subunits of F1 ATP synthase"/>
    <property type="match status" value="1"/>
</dbReference>
<dbReference type="SUPFAM" id="SSF50615">
    <property type="entry name" value="N-terminal domain of alpha and beta subunits of F1 ATP synthase"/>
    <property type="match status" value="1"/>
</dbReference>
<dbReference type="SUPFAM" id="SSF52540">
    <property type="entry name" value="P-loop containing nucleoside triphosphate hydrolases"/>
    <property type="match status" value="1"/>
</dbReference>
<dbReference type="PROSITE" id="PS00152">
    <property type="entry name" value="ATPASE_ALPHA_BETA"/>
    <property type="match status" value="1"/>
</dbReference>
<evidence type="ECO:0000255" key="1">
    <source>
        <dbReference type="HAMAP-Rule" id="MF_01346"/>
    </source>
</evidence>
<keyword id="KW-0066">ATP synthesis</keyword>
<keyword id="KW-0067">ATP-binding</keyword>
<keyword id="KW-0997">Cell inner membrane</keyword>
<keyword id="KW-1003">Cell membrane</keyword>
<keyword id="KW-0139">CF(1)</keyword>
<keyword id="KW-0375">Hydrogen ion transport</keyword>
<keyword id="KW-0406">Ion transport</keyword>
<keyword id="KW-0472">Membrane</keyword>
<keyword id="KW-0547">Nucleotide-binding</keyword>
<keyword id="KW-1278">Translocase</keyword>
<keyword id="KW-0813">Transport</keyword>
<accession>Q2P7Q6</accession>
<organism>
    <name type="scientific">Xanthomonas oryzae pv. oryzae (strain MAFF 311018)</name>
    <dbReference type="NCBI Taxonomy" id="342109"/>
    <lineage>
        <taxon>Bacteria</taxon>
        <taxon>Pseudomonadati</taxon>
        <taxon>Pseudomonadota</taxon>
        <taxon>Gammaproteobacteria</taxon>
        <taxon>Lysobacterales</taxon>
        <taxon>Lysobacteraceae</taxon>
        <taxon>Xanthomonas</taxon>
    </lineage>
</organism>
<feature type="chain" id="PRO_0000238407" description="ATP synthase subunit alpha">
    <location>
        <begin position="1"/>
        <end position="515"/>
    </location>
</feature>
<feature type="binding site" evidence="1">
    <location>
        <begin position="171"/>
        <end position="178"/>
    </location>
    <ligand>
        <name>ATP</name>
        <dbReference type="ChEBI" id="CHEBI:30616"/>
    </ligand>
</feature>
<feature type="site" description="Required for activity" evidence="1">
    <location>
        <position position="375"/>
    </location>
</feature>
<sequence length="515" mass="55311">MATTLNPSEISDLIKTRIEAVKLSAESRNEGSVTSVSDGIVRIFGLADVMQGEMIELPNNTFALALNLERDSVGAVVLGDYENLREGDVAKTTGRILEVPVGPELLGRVVNALGEPIDGKGPLGATQTAPVERVAPGVIWRKSVDQPVQTGYKSVDAMIPIGRGQRELVIGDRQTGKTALAIDAVINQKGTGIKCVYVAIGQKASTVANIVRKLEENGALAHTVVVAATASESAAMQYISPYAGCTMGEYFMDRGEDALIVYDDLSKQAVAYRQISLLLKRPPGREAYPGDVFYLHSRLLERAARVSEDYVEKFTNGAVTGKTGSLTALPIIETQAGDVSAFVPTNVISITDGQIFLETDLFNAGIRPAVNAGISVSRVGGAAQTKIIKKLSGGIRISLAQYRELAAFAQFASDLDEATRKQLERGQRVTELMKQKQYAPMSIANQALSIYAVNEGYLDDVPVNKLLAFEEGLHAHFANTQGELVSKINSTGGWDNDIEASFKKGIQEFKTTGTW</sequence>
<gene>
    <name evidence="1" type="primary">atpA</name>
    <name type="ordered locus">XOO0666</name>
</gene>
<name>ATPA_XANOM</name>
<comment type="function">
    <text evidence="1">Produces ATP from ADP in the presence of a proton gradient across the membrane. The alpha chain is a regulatory subunit.</text>
</comment>
<comment type="catalytic activity">
    <reaction evidence="1">
        <text>ATP + H2O + 4 H(+)(in) = ADP + phosphate + 5 H(+)(out)</text>
        <dbReference type="Rhea" id="RHEA:57720"/>
        <dbReference type="ChEBI" id="CHEBI:15377"/>
        <dbReference type="ChEBI" id="CHEBI:15378"/>
        <dbReference type="ChEBI" id="CHEBI:30616"/>
        <dbReference type="ChEBI" id="CHEBI:43474"/>
        <dbReference type="ChEBI" id="CHEBI:456216"/>
        <dbReference type="EC" id="7.1.2.2"/>
    </reaction>
</comment>
<comment type="subunit">
    <text evidence="1">F-type ATPases have 2 components, CF(1) - the catalytic core - and CF(0) - the membrane proton channel. CF(1) has five subunits: alpha(3), beta(3), gamma(1), delta(1), epsilon(1). CF(0) has three main subunits: a(1), b(2) and c(9-12). The alpha and beta chains form an alternating ring which encloses part of the gamma chain. CF(1) is attached to CF(0) by a central stalk formed by the gamma and epsilon chains, while a peripheral stalk is formed by the delta and b chains.</text>
</comment>
<comment type="subcellular location">
    <subcellularLocation>
        <location evidence="1">Cell inner membrane</location>
        <topology evidence="1">Peripheral membrane protein</topology>
    </subcellularLocation>
</comment>
<comment type="similarity">
    <text evidence="1">Belongs to the ATPase alpha/beta chains family.</text>
</comment>